<keyword id="KW-0067">ATP-binding</keyword>
<keyword id="KW-0418">Kinase</keyword>
<keyword id="KW-0545">Nucleotide biosynthesis</keyword>
<keyword id="KW-0547">Nucleotide-binding</keyword>
<keyword id="KW-1185">Reference proteome</keyword>
<keyword id="KW-0808">Transferase</keyword>
<feature type="chain" id="PRO_0000155313" description="Thymidylate kinase">
    <location>
        <begin position="1"/>
        <end position="215"/>
    </location>
</feature>
<feature type="binding site" evidence="1">
    <location>
        <begin position="11"/>
        <end position="18"/>
    </location>
    <ligand>
        <name>ATP</name>
        <dbReference type="ChEBI" id="CHEBI:30616"/>
    </ligand>
</feature>
<comment type="function">
    <text evidence="1">Phosphorylation of dTMP to form dTDP in both de novo and salvage pathways of dTTP synthesis.</text>
</comment>
<comment type="catalytic activity">
    <reaction evidence="1">
        <text>dTMP + ATP = dTDP + ADP</text>
        <dbReference type="Rhea" id="RHEA:13517"/>
        <dbReference type="ChEBI" id="CHEBI:30616"/>
        <dbReference type="ChEBI" id="CHEBI:58369"/>
        <dbReference type="ChEBI" id="CHEBI:63528"/>
        <dbReference type="ChEBI" id="CHEBI:456216"/>
        <dbReference type="EC" id="2.7.4.9"/>
    </reaction>
</comment>
<comment type="similarity">
    <text evidence="1">Belongs to the thymidylate kinase family.</text>
</comment>
<sequence length="215" mass="24390">MQRGKFITVEGIDGAGKSTHLAWLERFLQDKGLEVVVTREPGGTALGEALRQLLLDHRQAMHPETEALLMFAARREHLDKVILPALDRGAWVVSDRFTDASFAYQGGGRGVAQSKLDNLEQWVQAELSPDLTVYFDVPVIVGRERLQSTRVADRFEMESNLFFERVRQAYLQRAEQFPQRIRVVDGSRLLAEVKTAVAEIVEDFWSDLSDTQFRG</sequence>
<protein>
    <recommendedName>
        <fullName evidence="1">Thymidylate kinase</fullName>
        <ecNumber evidence="1">2.7.4.9</ecNumber>
    </recommendedName>
    <alternativeName>
        <fullName evidence="1">dTMP kinase</fullName>
    </alternativeName>
</protein>
<accession>Q82SW5</accession>
<proteinExistence type="inferred from homology"/>
<reference key="1">
    <citation type="journal article" date="2003" name="J. Bacteriol.">
        <title>Complete genome sequence of the ammonia-oxidizing bacterium and obligate chemolithoautotroph Nitrosomonas europaea.</title>
        <authorList>
            <person name="Chain P."/>
            <person name="Lamerdin J.E."/>
            <person name="Larimer F.W."/>
            <person name="Regala W."/>
            <person name="Lao V."/>
            <person name="Land M.L."/>
            <person name="Hauser L."/>
            <person name="Hooper A.B."/>
            <person name="Klotz M.G."/>
            <person name="Norton J."/>
            <person name="Sayavedra-Soto L.A."/>
            <person name="Arciero D.M."/>
            <person name="Hommes N.G."/>
            <person name="Whittaker M.M."/>
            <person name="Arp D.J."/>
        </authorList>
    </citation>
    <scope>NUCLEOTIDE SEQUENCE [LARGE SCALE GENOMIC DNA]</scope>
    <source>
        <strain>ATCC 19718 / CIP 103999 / KCTC 2705 / NBRC 14298</strain>
    </source>
</reference>
<evidence type="ECO:0000255" key="1">
    <source>
        <dbReference type="HAMAP-Rule" id="MF_00165"/>
    </source>
</evidence>
<dbReference type="EC" id="2.7.4.9" evidence="1"/>
<dbReference type="EMBL" id="AL954747">
    <property type="protein sequence ID" value="CAD86092.1"/>
    <property type="molecule type" value="Genomic_DNA"/>
</dbReference>
<dbReference type="RefSeq" id="WP_011112679.1">
    <property type="nucleotide sequence ID" value="NC_004757.1"/>
</dbReference>
<dbReference type="SMR" id="Q82SW5"/>
<dbReference type="STRING" id="228410.NE2181"/>
<dbReference type="GeneID" id="87105317"/>
<dbReference type="KEGG" id="neu:NE2181"/>
<dbReference type="eggNOG" id="COG0125">
    <property type="taxonomic scope" value="Bacteria"/>
</dbReference>
<dbReference type="HOGENOM" id="CLU_049131_0_2_4"/>
<dbReference type="OrthoDB" id="9774907at2"/>
<dbReference type="PhylomeDB" id="Q82SW5"/>
<dbReference type="Proteomes" id="UP000001416">
    <property type="component" value="Chromosome"/>
</dbReference>
<dbReference type="GO" id="GO:0005829">
    <property type="term" value="C:cytosol"/>
    <property type="evidence" value="ECO:0007669"/>
    <property type="project" value="TreeGrafter"/>
</dbReference>
<dbReference type="GO" id="GO:0005524">
    <property type="term" value="F:ATP binding"/>
    <property type="evidence" value="ECO:0007669"/>
    <property type="project" value="UniProtKB-UniRule"/>
</dbReference>
<dbReference type="GO" id="GO:0004798">
    <property type="term" value="F:dTMP kinase activity"/>
    <property type="evidence" value="ECO:0007669"/>
    <property type="project" value="UniProtKB-UniRule"/>
</dbReference>
<dbReference type="GO" id="GO:0006233">
    <property type="term" value="P:dTDP biosynthetic process"/>
    <property type="evidence" value="ECO:0007669"/>
    <property type="project" value="InterPro"/>
</dbReference>
<dbReference type="GO" id="GO:0006235">
    <property type="term" value="P:dTTP biosynthetic process"/>
    <property type="evidence" value="ECO:0007669"/>
    <property type="project" value="UniProtKB-UniRule"/>
</dbReference>
<dbReference type="GO" id="GO:0006227">
    <property type="term" value="P:dUDP biosynthetic process"/>
    <property type="evidence" value="ECO:0007669"/>
    <property type="project" value="TreeGrafter"/>
</dbReference>
<dbReference type="CDD" id="cd01672">
    <property type="entry name" value="TMPK"/>
    <property type="match status" value="1"/>
</dbReference>
<dbReference type="FunFam" id="3.40.50.300:FF:000225">
    <property type="entry name" value="Thymidylate kinase"/>
    <property type="match status" value="1"/>
</dbReference>
<dbReference type="Gene3D" id="3.40.50.300">
    <property type="entry name" value="P-loop containing nucleotide triphosphate hydrolases"/>
    <property type="match status" value="1"/>
</dbReference>
<dbReference type="HAMAP" id="MF_00165">
    <property type="entry name" value="Thymidylate_kinase"/>
    <property type="match status" value="1"/>
</dbReference>
<dbReference type="InterPro" id="IPR027417">
    <property type="entry name" value="P-loop_NTPase"/>
</dbReference>
<dbReference type="InterPro" id="IPR039430">
    <property type="entry name" value="Thymidylate_kin-like_dom"/>
</dbReference>
<dbReference type="InterPro" id="IPR018094">
    <property type="entry name" value="Thymidylate_kinase"/>
</dbReference>
<dbReference type="NCBIfam" id="TIGR00041">
    <property type="entry name" value="DTMP_kinase"/>
    <property type="match status" value="1"/>
</dbReference>
<dbReference type="PANTHER" id="PTHR10344">
    <property type="entry name" value="THYMIDYLATE KINASE"/>
    <property type="match status" value="1"/>
</dbReference>
<dbReference type="PANTHER" id="PTHR10344:SF4">
    <property type="entry name" value="UMP-CMP KINASE 2, MITOCHONDRIAL"/>
    <property type="match status" value="1"/>
</dbReference>
<dbReference type="Pfam" id="PF02223">
    <property type="entry name" value="Thymidylate_kin"/>
    <property type="match status" value="1"/>
</dbReference>
<dbReference type="SUPFAM" id="SSF52540">
    <property type="entry name" value="P-loop containing nucleoside triphosphate hydrolases"/>
    <property type="match status" value="1"/>
</dbReference>
<name>KTHY_NITEU</name>
<organism>
    <name type="scientific">Nitrosomonas europaea (strain ATCC 19718 / CIP 103999 / KCTC 2705 / NBRC 14298)</name>
    <dbReference type="NCBI Taxonomy" id="228410"/>
    <lineage>
        <taxon>Bacteria</taxon>
        <taxon>Pseudomonadati</taxon>
        <taxon>Pseudomonadota</taxon>
        <taxon>Betaproteobacteria</taxon>
        <taxon>Nitrosomonadales</taxon>
        <taxon>Nitrosomonadaceae</taxon>
        <taxon>Nitrosomonas</taxon>
    </lineage>
</organism>
<gene>
    <name evidence="1" type="primary">tmk</name>
    <name type="ordered locus">NE2181</name>
</gene>